<keyword id="KW-0007">Acetylation</keyword>
<keyword id="KW-0963">Cytoplasm</keyword>
<keyword id="KW-0256">Endoplasmic reticulum</keyword>
<keyword id="KW-0325">Glycoprotein</keyword>
<keyword id="KW-0378">Hydrolase</keyword>
<keyword id="KW-0449">Lipoprotein</keyword>
<keyword id="KW-0472">Membrane</keyword>
<keyword id="KW-0597">Phosphoprotein</keyword>
<keyword id="KW-0636">Prenylation</keyword>
<keyword id="KW-0645">Protease</keyword>
<keyword id="KW-1185">Reference proteome</keyword>
<keyword id="KW-0788">Thiol protease</keyword>
<keyword id="KW-0833">Ubl conjugation pathway</keyword>
<organism>
    <name type="scientific">Monodelphis domestica</name>
    <name type="common">Gray short-tailed opossum</name>
    <dbReference type="NCBI Taxonomy" id="13616"/>
    <lineage>
        <taxon>Eukaryota</taxon>
        <taxon>Metazoa</taxon>
        <taxon>Chordata</taxon>
        <taxon>Craniata</taxon>
        <taxon>Vertebrata</taxon>
        <taxon>Euteleostomi</taxon>
        <taxon>Mammalia</taxon>
        <taxon>Metatheria</taxon>
        <taxon>Didelphimorphia</taxon>
        <taxon>Didelphidae</taxon>
        <taxon>Monodelphis</taxon>
    </lineage>
</organism>
<protein>
    <recommendedName>
        <fullName>Ubiquitin carboxyl-terminal hydrolase isozyme L1</fullName>
        <shortName>UCH-L1</shortName>
        <ecNumber evidence="2">3.4.19.12</ecNumber>
    </recommendedName>
    <alternativeName>
        <fullName>Neuron cytoplasmic protein 9.5</fullName>
    </alternativeName>
    <alternativeName>
        <fullName>PGP 9.5</fullName>
        <shortName>PGP9.5</shortName>
    </alternativeName>
    <alternativeName>
        <fullName>Ubiquitin thioesterase L1</fullName>
    </alternativeName>
</protein>
<evidence type="ECO:0000250" key="1"/>
<evidence type="ECO:0000250" key="2">
    <source>
        <dbReference type="UniProtKB" id="P09936"/>
    </source>
</evidence>
<evidence type="ECO:0000250" key="3">
    <source>
        <dbReference type="UniProtKB" id="Q00981"/>
    </source>
</evidence>
<evidence type="ECO:0000250" key="4">
    <source>
        <dbReference type="UniProtKB" id="Q9R0P9"/>
    </source>
</evidence>
<evidence type="ECO:0000255" key="5">
    <source>
        <dbReference type="PROSITE-ProRule" id="PRU01393"/>
    </source>
</evidence>
<evidence type="ECO:0000255" key="6">
    <source>
        <dbReference type="PROSITE-ProRule" id="PRU10091"/>
    </source>
</evidence>
<evidence type="ECO:0000305" key="7"/>
<dbReference type="EC" id="3.4.19.12" evidence="2"/>
<dbReference type="EMBL" id="U32208">
    <property type="protein sequence ID" value="AAA89059.1"/>
    <property type="molecule type" value="Genomic_DNA"/>
</dbReference>
<dbReference type="RefSeq" id="XP_001365417.1">
    <property type="nucleotide sequence ID" value="XM_001365380.5"/>
</dbReference>
<dbReference type="SMR" id="P50103"/>
<dbReference type="FunCoup" id="P50103">
    <property type="interactions" value="918"/>
</dbReference>
<dbReference type="STRING" id="13616.ENSMODP00000025726"/>
<dbReference type="MEROPS" id="C12.001"/>
<dbReference type="Ensembl" id="ENSMODT00000026186.3">
    <property type="protein sequence ID" value="ENSMODP00000025726.1"/>
    <property type="gene ID" value="ENSMODG00000020568.4"/>
</dbReference>
<dbReference type="GeneID" id="100015629"/>
<dbReference type="KEGG" id="mdo:100015629"/>
<dbReference type="CTD" id="7345"/>
<dbReference type="eggNOG" id="KOG1415">
    <property type="taxonomic scope" value="Eukaryota"/>
</dbReference>
<dbReference type="GeneTree" id="ENSGT00940000157306"/>
<dbReference type="HOGENOM" id="CLU_054406_2_0_1"/>
<dbReference type="InParanoid" id="P50103"/>
<dbReference type="OMA" id="CISNGEA"/>
<dbReference type="OrthoDB" id="427186at2759"/>
<dbReference type="TreeFam" id="TF316166"/>
<dbReference type="Proteomes" id="UP000002280">
    <property type="component" value="Chromosome 5"/>
</dbReference>
<dbReference type="Bgee" id="ENSMODG00000020568">
    <property type="expression patterns" value="Expressed in spinal cord and 21 other cell types or tissues"/>
</dbReference>
<dbReference type="GO" id="GO:1904115">
    <property type="term" value="C:axon cytoplasm"/>
    <property type="evidence" value="ECO:0007669"/>
    <property type="project" value="GOC"/>
</dbReference>
<dbReference type="GO" id="GO:0005737">
    <property type="term" value="C:cytoplasm"/>
    <property type="evidence" value="ECO:0000318"/>
    <property type="project" value="GO_Central"/>
</dbReference>
<dbReference type="GO" id="GO:0005829">
    <property type="term" value="C:cytosol"/>
    <property type="evidence" value="ECO:0007669"/>
    <property type="project" value="Ensembl"/>
</dbReference>
<dbReference type="GO" id="GO:0005789">
    <property type="term" value="C:endoplasmic reticulum membrane"/>
    <property type="evidence" value="ECO:0007669"/>
    <property type="project" value="UniProtKB-SubCell"/>
</dbReference>
<dbReference type="GO" id="GO:0044306">
    <property type="term" value="C:neuron projection terminus"/>
    <property type="evidence" value="ECO:0007669"/>
    <property type="project" value="Ensembl"/>
</dbReference>
<dbReference type="GO" id="GO:0043025">
    <property type="term" value="C:neuronal cell body"/>
    <property type="evidence" value="ECO:0007669"/>
    <property type="project" value="Ensembl"/>
</dbReference>
<dbReference type="GO" id="GO:0005654">
    <property type="term" value="C:nucleoplasm"/>
    <property type="evidence" value="ECO:0007669"/>
    <property type="project" value="Ensembl"/>
</dbReference>
<dbReference type="GO" id="GO:0005886">
    <property type="term" value="C:plasma membrane"/>
    <property type="evidence" value="ECO:0007669"/>
    <property type="project" value="Ensembl"/>
</dbReference>
<dbReference type="GO" id="GO:0031694">
    <property type="term" value="F:alpha-2A adrenergic receptor binding"/>
    <property type="evidence" value="ECO:0007669"/>
    <property type="project" value="Ensembl"/>
</dbReference>
<dbReference type="GO" id="GO:0004843">
    <property type="term" value="F:cysteine-type deubiquitinase activity"/>
    <property type="evidence" value="ECO:0000318"/>
    <property type="project" value="GO_Central"/>
</dbReference>
<dbReference type="GO" id="GO:0004197">
    <property type="term" value="F:cysteine-type endopeptidase activity"/>
    <property type="evidence" value="ECO:0007669"/>
    <property type="project" value="Ensembl"/>
</dbReference>
<dbReference type="GO" id="GO:0008242">
    <property type="term" value="F:omega peptidase activity"/>
    <property type="evidence" value="ECO:0007669"/>
    <property type="project" value="Ensembl"/>
</dbReference>
<dbReference type="GO" id="GO:0043022">
    <property type="term" value="F:ribosome binding"/>
    <property type="evidence" value="ECO:0007669"/>
    <property type="project" value="Ensembl"/>
</dbReference>
<dbReference type="GO" id="GO:0043130">
    <property type="term" value="F:ubiquitin binding"/>
    <property type="evidence" value="ECO:0007669"/>
    <property type="project" value="Ensembl"/>
</dbReference>
<dbReference type="GO" id="GO:0031625">
    <property type="term" value="F:ubiquitin protein ligase binding"/>
    <property type="evidence" value="ECO:0007669"/>
    <property type="project" value="Ensembl"/>
</dbReference>
<dbReference type="GO" id="GO:0007628">
    <property type="term" value="P:adult walking behavior"/>
    <property type="evidence" value="ECO:0007669"/>
    <property type="project" value="Ensembl"/>
</dbReference>
<dbReference type="GO" id="GO:0007412">
    <property type="term" value="P:axon target recognition"/>
    <property type="evidence" value="ECO:0007669"/>
    <property type="project" value="Ensembl"/>
</dbReference>
<dbReference type="GO" id="GO:0019896">
    <property type="term" value="P:axonal transport of mitochondrion"/>
    <property type="evidence" value="ECO:0007669"/>
    <property type="project" value="Ensembl"/>
</dbReference>
<dbReference type="GO" id="GO:0071466">
    <property type="term" value="P:cellular response to xenobiotic stimulus"/>
    <property type="evidence" value="ECO:0007669"/>
    <property type="project" value="Ensembl"/>
</dbReference>
<dbReference type="GO" id="GO:0042755">
    <property type="term" value="P:eating behavior"/>
    <property type="evidence" value="ECO:0007669"/>
    <property type="project" value="Ensembl"/>
</dbReference>
<dbReference type="GO" id="GO:0002176">
    <property type="term" value="P:male germ cell proliferation"/>
    <property type="evidence" value="ECO:0007669"/>
    <property type="project" value="Ensembl"/>
</dbReference>
<dbReference type="GO" id="GO:0055001">
    <property type="term" value="P:muscle cell development"/>
    <property type="evidence" value="ECO:0007669"/>
    <property type="project" value="Ensembl"/>
</dbReference>
<dbReference type="GO" id="GO:0050905">
    <property type="term" value="P:neuromuscular process"/>
    <property type="evidence" value="ECO:0007669"/>
    <property type="project" value="Ensembl"/>
</dbReference>
<dbReference type="GO" id="GO:0045821">
    <property type="term" value="P:positive regulation of glycolytic process"/>
    <property type="evidence" value="ECO:0007669"/>
    <property type="project" value="Ensembl"/>
</dbReference>
<dbReference type="GO" id="GO:0030163">
    <property type="term" value="P:protein catabolic process"/>
    <property type="evidence" value="ECO:0000318"/>
    <property type="project" value="GO_Central"/>
</dbReference>
<dbReference type="GO" id="GO:0016579">
    <property type="term" value="P:protein deubiquitination"/>
    <property type="evidence" value="ECO:0007669"/>
    <property type="project" value="Ensembl"/>
</dbReference>
<dbReference type="GO" id="GO:0002931">
    <property type="term" value="P:response to ischemia"/>
    <property type="evidence" value="ECO:0007669"/>
    <property type="project" value="Ensembl"/>
</dbReference>
<dbReference type="GO" id="GO:0006511">
    <property type="term" value="P:ubiquitin-dependent protein catabolic process"/>
    <property type="evidence" value="ECO:0007669"/>
    <property type="project" value="InterPro"/>
</dbReference>
<dbReference type="CDD" id="cd09616">
    <property type="entry name" value="Peptidase_C12_UCH_L1_L3"/>
    <property type="match status" value="1"/>
</dbReference>
<dbReference type="FunFam" id="3.40.532.10:FF:000004">
    <property type="entry name" value="Ubiquitin carboxyl-terminal hydrolase"/>
    <property type="match status" value="1"/>
</dbReference>
<dbReference type="Gene3D" id="3.40.532.10">
    <property type="entry name" value="Peptidase C12, ubiquitin carboxyl-terminal hydrolase"/>
    <property type="match status" value="1"/>
</dbReference>
<dbReference type="InterPro" id="IPR038765">
    <property type="entry name" value="Papain-like_cys_pep_sf"/>
</dbReference>
<dbReference type="InterPro" id="IPR001578">
    <property type="entry name" value="Peptidase_C12_UCH"/>
</dbReference>
<dbReference type="InterPro" id="IPR036959">
    <property type="entry name" value="Peptidase_C12_UCH_sf"/>
</dbReference>
<dbReference type="InterPro" id="IPR057254">
    <property type="entry name" value="UCH_AS"/>
</dbReference>
<dbReference type="PANTHER" id="PTHR10589">
    <property type="entry name" value="UBIQUITIN CARBOXYL-TERMINAL HYDROLASE"/>
    <property type="match status" value="1"/>
</dbReference>
<dbReference type="PANTHER" id="PTHR10589:SF19">
    <property type="entry name" value="UBIQUITIN CARBOXYL-TERMINAL HYDROLASE ISOZYME L1"/>
    <property type="match status" value="1"/>
</dbReference>
<dbReference type="Pfam" id="PF01088">
    <property type="entry name" value="Peptidase_C12"/>
    <property type="match status" value="1"/>
</dbReference>
<dbReference type="PRINTS" id="PR00707">
    <property type="entry name" value="UBCTHYDRLASE"/>
</dbReference>
<dbReference type="SUPFAM" id="SSF54001">
    <property type="entry name" value="Cysteine proteinases"/>
    <property type="match status" value="1"/>
</dbReference>
<dbReference type="PROSITE" id="PS00140">
    <property type="entry name" value="UCH_1"/>
    <property type="match status" value="1"/>
</dbReference>
<dbReference type="PROSITE" id="PS52048">
    <property type="entry name" value="UCH_DOMAIN"/>
    <property type="match status" value="1"/>
</dbReference>
<proteinExistence type="inferred from homology"/>
<feature type="chain" id="PRO_0000211057" description="Ubiquitin carboxyl-terminal hydrolase isozyme L1">
    <location>
        <begin position="1"/>
        <end position="223"/>
    </location>
</feature>
<feature type="propeptide" id="PRO_0000421570" description="Removed in mature form" evidence="1">
    <location>
        <begin position="221"/>
        <end position="223"/>
    </location>
</feature>
<feature type="domain" description="UCH catalytic" evidence="5">
    <location>
        <begin position="2"/>
        <end position="221"/>
    </location>
</feature>
<feature type="region of interest" description="Interaction with ubiquitin" evidence="2">
    <location>
        <begin position="5"/>
        <end position="10"/>
    </location>
</feature>
<feature type="region of interest" description="Interaction with ubiquitin" evidence="2">
    <location>
        <begin position="211"/>
        <end position="216"/>
    </location>
</feature>
<feature type="active site" description="Nucleophile" evidence="5 6">
    <location>
        <position position="90"/>
    </location>
</feature>
<feature type="active site" description="Proton donor" evidence="5">
    <location>
        <position position="161"/>
    </location>
</feature>
<feature type="site" description="Transition state stabilizer" evidence="5">
    <location>
        <position position="84"/>
    </location>
</feature>
<feature type="site" description="Important for enzyme activity" evidence="5">
    <location>
        <position position="176"/>
    </location>
</feature>
<feature type="modified residue" description="N-acetylmethionine" evidence="2">
    <location>
        <position position="1"/>
    </location>
</feature>
<feature type="modified residue" description="Phosphoserine" evidence="3">
    <location>
        <position position="125"/>
    </location>
</feature>
<feature type="lipid moiety-binding region" description="S-farnesyl cysteine" evidence="2">
    <location>
        <position position="220"/>
    </location>
</feature>
<gene>
    <name type="primary">UCHL1</name>
</gene>
<reference key="1">
    <citation type="journal article" date="1996" name="J. Neurochem.">
        <title>Identification of evolutionary conserved regulatory sequences in the 5' untranscribed region of the neural-specific ubiquitin C-terminal hydrolase (PGP9.5) gene.</title>
        <authorList>
            <person name="Mann D.A."/>
            <person name="Trowern A.R."/>
            <person name="Lavender F.L."/>
            <person name="Whittaker P.A."/>
            <person name="Thompson R.J."/>
        </authorList>
    </citation>
    <scope>NUCLEOTIDE SEQUENCE [GENOMIC DNA]</scope>
    <source>
        <tissue>Liver</tissue>
    </source>
</reference>
<comment type="function">
    <text evidence="2 4">Ubiquitin-protein hydrolase involved both in the processing of ubiquitin precursors and of ubiquitinated proteins. This enzyme is a thiol protease that recognizes and hydrolyzes a peptide bond at the C-terminal glycine of ubiquitin (By similarity). Also binds to free monoubiquitin and may prevent its degradation in lysosomes (By similarity). The homodimer may have ATP-independent ubiquitin ligase activity (By similarity).</text>
</comment>
<comment type="catalytic activity">
    <reaction evidence="2">
        <text>Thiol-dependent hydrolysis of ester, thioester, amide, peptide and isopeptide bonds formed by the C-terminal Gly of ubiquitin (a 76-residue protein attached to proteins as an intracellular targeting signal).</text>
        <dbReference type="EC" id="3.4.19.12"/>
    </reaction>
</comment>
<comment type="subunit">
    <text evidence="1">Monomer. Homodimer. Interacts with COPS5 and SNCA (By similarity).</text>
</comment>
<comment type="subcellular location">
    <subcellularLocation>
        <location>Cytoplasm</location>
    </subcellularLocation>
    <subcellularLocation>
        <location evidence="1">Endoplasmic reticulum membrane</location>
        <topology evidence="1">Lipid-anchor</topology>
    </subcellularLocation>
</comment>
<comment type="PTM">
    <text evidence="1">O-glycosylated.</text>
</comment>
<comment type="miscellaneous">
    <text evidence="1">In contrast to UCHL3, does not hydrolyze a peptide bond at the C-terminal glycine of NEDD8.</text>
</comment>
<comment type="similarity">
    <text evidence="7">Belongs to the peptidase C12 family.</text>
</comment>
<comment type="caution">
    <text evidence="2">The homodimer may have ATP-independent ubiquitin ligase activity. However, in another study, UCHL1 was shown to lack ubiquitin ligase activity.</text>
</comment>
<name>UCHL1_MONDO</name>
<sequence>MQLKPMEINPEMLNKVLTRLGVGGDWKFVDVLGLEEDVLGTVPAPACALLLLFPLTAQHENFRKKQIEELKGQEVSPKVYFMKQTVGNSCGTIGLIHAVANNQDKLNFDDGSVLKQFISETAKLSPEDRAKCFEKNEAIQAAHDAVAQEGQCRVDDEVNFHFILFNNVDGHLYELDGRMPFPINHGSNSDESVLKGAAEICRQFTEREEGEVRFSAVALCKCA</sequence>
<accession>P50103</accession>
<accession>F7APK9</accession>